<reference key="1">
    <citation type="submission" date="2006-01" db="EMBL/GenBank/DDBJ databases">
        <title>Complete sequence of Novosphingobium aromaticivorans DSM 12444.</title>
        <authorList>
            <consortium name="US DOE Joint Genome Institute"/>
            <person name="Copeland A."/>
            <person name="Lucas S."/>
            <person name="Lapidus A."/>
            <person name="Barry K."/>
            <person name="Detter J.C."/>
            <person name="Glavina T."/>
            <person name="Hammon N."/>
            <person name="Israni S."/>
            <person name="Pitluck S."/>
            <person name="Chain P."/>
            <person name="Malfatti S."/>
            <person name="Shin M."/>
            <person name="Vergez L."/>
            <person name="Schmutz J."/>
            <person name="Larimer F."/>
            <person name="Land M."/>
            <person name="Kyrpides N."/>
            <person name="Ivanova N."/>
            <person name="Fredrickson J."/>
            <person name="Balkwill D."/>
            <person name="Romine M.F."/>
            <person name="Richardson P."/>
        </authorList>
    </citation>
    <scope>NUCLEOTIDE SEQUENCE [LARGE SCALE GENOMIC DNA]</scope>
    <source>
        <strain>ATCC 700278 / DSM 12444 / CCUG 56034 / CIP 105152 / NBRC 16084 / F199</strain>
    </source>
</reference>
<name>RL1_NOVAD</name>
<proteinExistence type="inferred from homology"/>
<keyword id="KW-1185">Reference proteome</keyword>
<keyword id="KW-0678">Repressor</keyword>
<keyword id="KW-0687">Ribonucleoprotein</keyword>
<keyword id="KW-0689">Ribosomal protein</keyword>
<keyword id="KW-0694">RNA-binding</keyword>
<keyword id="KW-0699">rRNA-binding</keyword>
<keyword id="KW-0810">Translation regulation</keyword>
<keyword id="KW-0820">tRNA-binding</keyword>
<accession>Q2GA44</accession>
<evidence type="ECO:0000255" key="1">
    <source>
        <dbReference type="HAMAP-Rule" id="MF_01318"/>
    </source>
</evidence>
<evidence type="ECO:0000305" key="2"/>
<comment type="function">
    <text evidence="1">Binds directly to 23S rRNA. The L1 stalk is quite mobile in the ribosome, and is involved in E site tRNA release.</text>
</comment>
<comment type="function">
    <text evidence="1">Protein L1 is also a translational repressor protein, it controls the translation of the L11 operon by binding to its mRNA.</text>
</comment>
<comment type="subunit">
    <text evidence="1">Part of the 50S ribosomal subunit.</text>
</comment>
<comment type="similarity">
    <text evidence="1">Belongs to the universal ribosomal protein uL1 family.</text>
</comment>
<dbReference type="EMBL" id="CP000248">
    <property type="protein sequence ID" value="ABD25279.1"/>
    <property type="molecule type" value="Genomic_DNA"/>
</dbReference>
<dbReference type="RefSeq" id="WP_011444493.1">
    <property type="nucleotide sequence ID" value="NC_007794.1"/>
</dbReference>
<dbReference type="SMR" id="Q2GA44"/>
<dbReference type="STRING" id="279238.Saro_0834"/>
<dbReference type="KEGG" id="nar:Saro_0834"/>
<dbReference type="eggNOG" id="COG0081">
    <property type="taxonomic scope" value="Bacteria"/>
</dbReference>
<dbReference type="HOGENOM" id="CLU_062853_0_0_5"/>
<dbReference type="Proteomes" id="UP000009134">
    <property type="component" value="Chromosome"/>
</dbReference>
<dbReference type="GO" id="GO:0022625">
    <property type="term" value="C:cytosolic large ribosomal subunit"/>
    <property type="evidence" value="ECO:0007669"/>
    <property type="project" value="TreeGrafter"/>
</dbReference>
<dbReference type="GO" id="GO:0019843">
    <property type="term" value="F:rRNA binding"/>
    <property type="evidence" value="ECO:0007669"/>
    <property type="project" value="UniProtKB-UniRule"/>
</dbReference>
<dbReference type="GO" id="GO:0003735">
    <property type="term" value="F:structural constituent of ribosome"/>
    <property type="evidence" value="ECO:0007669"/>
    <property type="project" value="InterPro"/>
</dbReference>
<dbReference type="GO" id="GO:0000049">
    <property type="term" value="F:tRNA binding"/>
    <property type="evidence" value="ECO:0007669"/>
    <property type="project" value="UniProtKB-KW"/>
</dbReference>
<dbReference type="GO" id="GO:0006417">
    <property type="term" value="P:regulation of translation"/>
    <property type="evidence" value="ECO:0007669"/>
    <property type="project" value="UniProtKB-KW"/>
</dbReference>
<dbReference type="GO" id="GO:0006412">
    <property type="term" value="P:translation"/>
    <property type="evidence" value="ECO:0007669"/>
    <property type="project" value="UniProtKB-UniRule"/>
</dbReference>
<dbReference type="CDD" id="cd00403">
    <property type="entry name" value="Ribosomal_L1"/>
    <property type="match status" value="1"/>
</dbReference>
<dbReference type="FunFam" id="3.40.50.790:FF:000001">
    <property type="entry name" value="50S ribosomal protein L1"/>
    <property type="match status" value="1"/>
</dbReference>
<dbReference type="Gene3D" id="3.30.190.20">
    <property type="match status" value="1"/>
</dbReference>
<dbReference type="Gene3D" id="3.40.50.790">
    <property type="match status" value="1"/>
</dbReference>
<dbReference type="HAMAP" id="MF_01318_B">
    <property type="entry name" value="Ribosomal_uL1_B"/>
    <property type="match status" value="1"/>
</dbReference>
<dbReference type="InterPro" id="IPR005878">
    <property type="entry name" value="Ribosom_uL1_bac-type"/>
</dbReference>
<dbReference type="InterPro" id="IPR002143">
    <property type="entry name" value="Ribosomal_uL1"/>
</dbReference>
<dbReference type="InterPro" id="IPR023674">
    <property type="entry name" value="Ribosomal_uL1-like"/>
</dbReference>
<dbReference type="InterPro" id="IPR028364">
    <property type="entry name" value="Ribosomal_uL1/biogenesis"/>
</dbReference>
<dbReference type="InterPro" id="IPR016095">
    <property type="entry name" value="Ribosomal_uL1_3-a/b-sand"/>
</dbReference>
<dbReference type="InterPro" id="IPR023673">
    <property type="entry name" value="Ribosomal_uL1_CS"/>
</dbReference>
<dbReference type="NCBIfam" id="TIGR01169">
    <property type="entry name" value="rplA_bact"/>
    <property type="match status" value="1"/>
</dbReference>
<dbReference type="PANTHER" id="PTHR36427">
    <property type="entry name" value="54S RIBOSOMAL PROTEIN L1, MITOCHONDRIAL"/>
    <property type="match status" value="1"/>
</dbReference>
<dbReference type="PANTHER" id="PTHR36427:SF3">
    <property type="entry name" value="LARGE RIBOSOMAL SUBUNIT PROTEIN UL1M"/>
    <property type="match status" value="1"/>
</dbReference>
<dbReference type="Pfam" id="PF00687">
    <property type="entry name" value="Ribosomal_L1"/>
    <property type="match status" value="1"/>
</dbReference>
<dbReference type="PIRSF" id="PIRSF002155">
    <property type="entry name" value="Ribosomal_L1"/>
    <property type="match status" value="1"/>
</dbReference>
<dbReference type="SUPFAM" id="SSF56808">
    <property type="entry name" value="Ribosomal protein L1"/>
    <property type="match status" value="1"/>
</dbReference>
<dbReference type="PROSITE" id="PS01199">
    <property type="entry name" value="RIBOSOMAL_L1"/>
    <property type="match status" value="1"/>
</dbReference>
<gene>
    <name evidence="1" type="primary">rplA</name>
    <name type="ordered locus">Saro_0834</name>
</gene>
<feature type="chain" id="PRO_0000308063" description="Large ribosomal subunit protein uL1">
    <location>
        <begin position="1"/>
        <end position="233"/>
    </location>
</feature>
<sequence>MAKQTKKQKALVTKLGDNQKLYAVDEAIALLKDLKSAKFDESLEVSLNLGVDPRHADQMVRGMVTLPSGTGKDVKVAVFARGDKAEAALAAGADKVGAEDLLEDMQAGNLDYGRVIATPDMMGIVGRLGKVLGPKGLMPNPKLGTVTPNVAEAVKAAKGGQIEFRVEKAGIIHGGIGKLSFSDEALRANFDAFVDAIVKAKPAGAKGKYLRKVGLSSSMGPGLKIDLAQVNGG</sequence>
<protein>
    <recommendedName>
        <fullName evidence="1">Large ribosomal subunit protein uL1</fullName>
    </recommendedName>
    <alternativeName>
        <fullName evidence="2">50S ribosomal protein L1</fullName>
    </alternativeName>
</protein>
<organism>
    <name type="scientific">Novosphingobium aromaticivorans (strain ATCC 700278 / DSM 12444 / CCUG 56034 / CIP 105152 / NBRC 16084 / F199)</name>
    <dbReference type="NCBI Taxonomy" id="279238"/>
    <lineage>
        <taxon>Bacteria</taxon>
        <taxon>Pseudomonadati</taxon>
        <taxon>Pseudomonadota</taxon>
        <taxon>Alphaproteobacteria</taxon>
        <taxon>Sphingomonadales</taxon>
        <taxon>Sphingomonadaceae</taxon>
        <taxon>Novosphingobium</taxon>
    </lineage>
</organism>